<reference key="1">
    <citation type="journal article" date="2002" name="Proc. Natl. Acad. Sci. U.S.A.">
        <title>Complete genome sequence and comparative genomic analysis of an emerging human pathogen, serotype V Streptococcus agalactiae.</title>
        <authorList>
            <person name="Tettelin H."/>
            <person name="Masignani V."/>
            <person name="Cieslewicz M.J."/>
            <person name="Eisen J.A."/>
            <person name="Peterson S.N."/>
            <person name="Wessels M.R."/>
            <person name="Paulsen I.T."/>
            <person name="Nelson K.E."/>
            <person name="Margarit I."/>
            <person name="Read T.D."/>
            <person name="Madoff L.C."/>
            <person name="Wolf A.M."/>
            <person name="Beanan M.J."/>
            <person name="Brinkac L.M."/>
            <person name="Daugherty S.C."/>
            <person name="DeBoy R.T."/>
            <person name="Durkin A.S."/>
            <person name="Kolonay J.F."/>
            <person name="Madupu R."/>
            <person name="Lewis M.R."/>
            <person name="Radune D."/>
            <person name="Fedorova N.B."/>
            <person name="Scanlan D."/>
            <person name="Khouri H.M."/>
            <person name="Mulligan S."/>
            <person name="Carty H.A."/>
            <person name="Cline R.T."/>
            <person name="Van Aken S.E."/>
            <person name="Gill J."/>
            <person name="Scarselli M."/>
            <person name="Mora M."/>
            <person name="Iacobini E.T."/>
            <person name="Brettoni C."/>
            <person name="Galli G."/>
            <person name="Mariani M."/>
            <person name="Vegni F."/>
            <person name="Maione D."/>
            <person name="Rinaudo D."/>
            <person name="Rappuoli R."/>
            <person name="Telford J.L."/>
            <person name="Kasper D.L."/>
            <person name="Grandi G."/>
            <person name="Fraser C.M."/>
        </authorList>
    </citation>
    <scope>NUCLEOTIDE SEQUENCE [LARGE SCALE GENOMIC DNA]</scope>
    <source>
        <strain>ATCC BAA-611 / 2603 V/R</strain>
    </source>
</reference>
<dbReference type="EC" id="6.1.1.6" evidence="1"/>
<dbReference type="EMBL" id="AE009948">
    <property type="protein sequence ID" value="AAM99637.1"/>
    <property type="molecule type" value="Genomic_DNA"/>
</dbReference>
<dbReference type="RefSeq" id="NP_687765.1">
    <property type="nucleotide sequence ID" value="NC_004116.1"/>
</dbReference>
<dbReference type="RefSeq" id="WP_000070708.1">
    <property type="nucleotide sequence ID" value="NC_004116.1"/>
</dbReference>
<dbReference type="SMR" id="Q8E0I1"/>
<dbReference type="STRING" id="208435.SAG0750"/>
<dbReference type="KEGG" id="sag:SAG0750"/>
<dbReference type="PATRIC" id="fig|208435.3.peg.756"/>
<dbReference type="HOGENOM" id="CLU_008255_6_0_9"/>
<dbReference type="OrthoDB" id="9801152at2"/>
<dbReference type="Proteomes" id="UP000000821">
    <property type="component" value="Chromosome"/>
</dbReference>
<dbReference type="GO" id="GO:0005829">
    <property type="term" value="C:cytosol"/>
    <property type="evidence" value="ECO:0007669"/>
    <property type="project" value="TreeGrafter"/>
</dbReference>
<dbReference type="GO" id="GO:0005524">
    <property type="term" value="F:ATP binding"/>
    <property type="evidence" value="ECO:0007669"/>
    <property type="project" value="UniProtKB-UniRule"/>
</dbReference>
<dbReference type="GO" id="GO:0140096">
    <property type="term" value="F:catalytic activity, acting on a protein"/>
    <property type="evidence" value="ECO:0007669"/>
    <property type="project" value="UniProtKB-ARBA"/>
</dbReference>
<dbReference type="GO" id="GO:0004824">
    <property type="term" value="F:lysine-tRNA ligase activity"/>
    <property type="evidence" value="ECO:0007669"/>
    <property type="project" value="UniProtKB-UniRule"/>
</dbReference>
<dbReference type="GO" id="GO:0000287">
    <property type="term" value="F:magnesium ion binding"/>
    <property type="evidence" value="ECO:0007669"/>
    <property type="project" value="UniProtKB-UniRule"/>
</dbReference>
<dbReference type="GO" id="GO:0016740">
    <property type="term" value="F:transferase activity"/>
    <property type="evidence" value="ECO:0007669"/>
    <property type="project" value="UniProtKB-ARBA"/>
</dbReference>
<dbReference type="GO" id="GO:0000049">
    <property type="term" value="F:tRNA binding"/>
    <property type="evidence" value="ECO:0007669"/>
    <property type="project" value="TreeGrafter"/>
</dbReference>
<dbReference type="GO" id="GO:0006430">
    <property type="term" value="P:lysyl-tRNA aminoacylation"/>
    <property type="evidence" value="ECO:0007669"/>
    <property type="project" value="UniProtKB-UniRule"/>
</dbReference>
<dbReference type="CDD" id="cd00775">
    <property type="entry name" value="LysRS_core"/>
    <property type="match status" value="1"/>
</dbReference>
<dbReference type="CDD" id="cd04322">
    <property type="entry name" value="LysRS_N"/>
    <property type="match status" value="1"/>
</dbReference>
<dbReference type="FunFam" id="2.40.50.140:FF:000024">
    <property type="entry name" value="Lysine--tRNA ligase"/>
    <property type="match status" value="1"/>
</dbReference>
<dbReference type="FunFam" id="3.30.930.10:FF:000001">
    <property type="entry name" value="Lysine--tRNA ligase"/>
    <property type="match status" value="1"/>
</dbReference>
<dbReference type="Gene3D" id="3.30.930.10">
    <property type="entry name" value="Bira Bifunctional Protein, Domain 2"/>
    <property type="match status" value="1"/>
</dbReference>
<dbReference type="Gene3D" id="2.40.50.140">
    <property type="entry name" value="Nucleic acid-binding proteins"/>
    <property type="match status" value="1"/>
</dbReference>
<dbReference type="HAMAP" id="MF_00252">
    <property type="entry name" value="Lys_tRNA_synth_class2"/>
    <property type="match status" value="1"/>
</dbReference>
<dbReference type="InterPro" id="IPR004364">
    <property type="entry name" value="Aa-tRNA-synt_II"/>
</dbReference>
<dbReference type="InterPro" id="IPR006195">
    <property type="entry name" value="aa-tRNA-synth_II"/>
</dbReference>
<dbReference type="InterPro" id="IPR045864">
    <property type="entry name" value="aa-tRNA-synth_II/BPL/LPL"/>
</dbReference>
<dbReference type="InterPro" id="IPR002313">
    <property type="entry name" value="Lys-tRNA-ligase_II"/>
</dbReference>
<dbReference type="InterPro" id="IPR034762">
    <property type="entry name" value="Lys-tRNA-ligase_II_bac/euk"/>
</dbReference>
<dbReference type="InterPro" id="IPR044136">
    <property type="entry name" value="Lys-tRNA-ligase_II_N"/>
</dbReference>
<dbReference type="InterPro" id="IPR018149">
    <property type="entry name" value="Lys-tRNA-synth_II_C"/>
</dbReference>
<dbReference type="InterPro" id="IPR012340">
    <property type="entry name" value="NA-bd_OB-fold"/>
</dbReference>
<dbReference type="InterPro" id="IPR004365">
    <property type="entry name" value="NA-bd_OB_tRNA"/>
</dbReference>
<dbReference type="NCBIfam" id="TIGR00499">
    <property type="entry name" value="lysS_bact"/>
    <property type="match status" value="1"/>
</dbReference>
<dbReference type="NCBIfam" id="NF001756">
    <property type="entry name" value="PRK00484.1"/>
    <property type="match status" value="1"/>
</dbReference>
<dbReference type="PANTHER" id="PTHR42918:SF15">
    <property type="entry name" value="LYSINE--TRNA LIGASE, CHLOROPLASTIC_MITOCHONDRIAL"/>
    <property type="match status" value="1"/>
</dbReference>
<dbReference type="PANTHER" id="PTHR42918">
    <property type="entry name" value="LYSYL-TRNA SYNTHETASE"/>
    <property type="match status" value="1"/>
</dbReference>
<dbReference type="Pfam" id="PF00152">
    <property type="entry name" value="tRNA-synt_2"/>
    <property type="match status" value="1"/>
</dbReference>
<dbReference type="Pfam" id="PF01336">
    <property type="entry name" value="tRNA_anti-codon"/>
    <property type="match status" value="1"/>
</dbReference>
<dbReference type="PIRSF" id="PIRSF039101">
    <property type="entry name" value="LysRS2"/>
    <property type="match status" value="1"/>
</dbReference>
<dbReference type="PRINTS" id="PR00982">
    <property type="entry name" value="TRNASYNTHLYS"/>
</dbReference>
<dbReference type="SUPFAM" id="SSF55681">
    <property type="entry name" value="Class II aaRS and biotin synthetases"/>
    <property type="match status" value="1"/>
</dbReference>
<dbReference type="SUPFAM" id="SSF50249">
    <property type="entry name" value="Nucleic acid-binding proteins"/>
    <property type="match status" value="1"/>
</dbReference>
<dbReference type="PROSITE" id="PS50862">
    <property type="entry name" value="AA_TRNA_LIGASE_II"/>
    <property type="match status" value="1"/>
</dbReference>
<feature type="chain" id="PRO_0000152685" description="Lysine--tRNA ligase">
    <location>
        <begin position="1"/>
        <end position="496"/>
    </location>
</feature>
<feature type="binding site" evidence="1">
    <location>
        <position position="409"/>
    </location>
    <ligand>
        <name>Mg(2+)</name>
        <dbReference type="ChEBI" id="CHEBI:18420"/>
        <label>1</label>
    </ligand>
</feature>
<feature type="binding site" evidence="1">
    <location>
        <position position="416"/>
    </location>
    <ligand>
        <name>Mg(2+)</name>
        <dbReference type="ChEBI" id="CHEBI:18420"/>
        <label>1</label>
    </ligand>
</feature>
<feature type="binding site" evidence="1">
    <location>
        <position position="416"/>
    </location>
    <ligand>
        <name>Mg(2+)</name>
        <dbReference type="ChEBI" id="CHEBI:18420"/>
        <label>2</label>
    </ligand>
</feature>
<gene>
    <name evidence="1" type="primary">lysS</name>
    <name type="ordered locus">SAG0750</name>
</gene>
<accession>Q8E0I1</accession>
<evidence type="ECO:0000255" key="1">
    <source>
        <dbReference type="HAMAP-Rule" id="MF_00252"/>
    </source>
</evidence>
<protein>
    <recommendedName>
        <fullName evidence="1">Lysine--tRNA ligase</fullName>
        <ecNumber evidence="1">6.1.1.6</ecNumber>
    </recommendedName>
    <alternativeName>
        <fullName evidence="1">Lysyl-tRNA synthetase</fullName>
        <shortName evidence="1">LysRS</shortName>
    </alternativeName>
</protein>
<proteinExistence type="inferred from homology"/>
<keyword id="KW-0030">Aminoacyl-tRNA synthetase</keyword>
<keyword id="KW-0067">ATP-binding</keyword>
<keyword id="KW-0963">Cytoplasm</keyword>
<keyword id="KW-0436">Ligase</keyword>
<keyword id="KW-0460">Magnesium</keyword>
<keyword id="KW-0479">Metal-binding</keyword>
<keyword id="KW-0547">Nucleotide-binding</keyword>
<keyword id="KW-0648">Protein biosynthesis</keyword>
<keyword id="KW-1185">Reference proteome</keyword>
<sequence length="496" mass="56486">MSNQHIEELNDQQIVRREKMAALTEQGIDPFGKRFERTATSGQLNEKYADKSKEDLHDIEETATIAGRLMTKRGKGKVGFAHIQDREGQIQIYVRKDSVGEENYEIFKKADLGDFLGVEGQVMRTDMGELSIKATHITHLSKALRPLPEKFHGLTDIETIYRKRHLDLISNRDSFDRFVTRSKIISEIRRFMDSNGFLEVETPVLHNEAGGASARPFITHHNAQDIDMVLRIATELHLKRLIVGGMERVYEIGRIFRNEGMDATHNPEFTSIEAYQAYADYQDIMDLTEGIIQHVTKTVKGDGPINYQGTEIKINEPFKRVHMVDAVKEITGIDFWKEMTLEEAQALAQEKNVPLEKHFTTVGHIINAFFEEFVEDTLIQPTFVFGHPVEVSPLAKKNDTDPRFTDRFELFIMTKEYANAFTELNDPIDQLSRFEAQASAKELGDDEATGVDYDYVEALEYGMPPTGGLGIGIDRLCMLLTDTTTIRDVLLFPTMK</sequence>
<name>SYK_STRA5</name>
<comment type="catalytic activity">
    <reaction evidence="1">
        <text>tRNA(Lys) + L-lysine + ATP = L-lysyl-tRNA(Lys) + AMP + diphosphate</text>
        <dbReference type="Rhea" id="RHEA:20792"/>
        <dbReference type="Rhea" id="RHEA-COMP:9696"/>
        <dbReference type="Rhea" id="RHEA-COMP:9697"/>
        <dbReference type="ChEBI" id="CHEBI:30616"/>
        <dbReference type="ChEBI" id="CHEBI:32551"/>
        <dbReference type="ChEBI" id="CHEBI:33019"/>
        <dbReference type="ChEBI" id="CHEBI:78442"/>
        <dbReference type="ChEBI" id="CHEBI:78529"/>
        <dbReference type="ChEBI" id="CHEBI:456215"/>
        <dbReference type="EC" id="6.1.1.6"/>
    </reaction>
</comment>
<comment type="cofactor">
    <cofactor evidence="1">
        <name>Mg(2+)</name>
        <dbReference type="ChEBI" id="CHEBI:18420"/>
    </cofactor>
    <text evidence="1">Binds 3 Mg(2+) ions per subunit.</text>
</comment>
<comment type="subunit">
    <text evidence="1">Homodimer.</text>
</comment>
<comment type="subcellular location">
    <subcellularLocation>
        <location evidence="1">Cytoplasm</location>
    </subcellularLocation>
</comment>
<comment type="similarity">
    <text evidence="1">Belongs to the class-II aminoacyl-tRNA synthetase family.</text>
</comment>
<organism>
    <name type="scientific">Streptococcus agalactiae serotype V (strain ATCC BAA-611 / 2603 V/R)</name>
    <dbReference type="NCBI Taxonomy" id="208435"/>
    <lineage>
        <taxon>Bacteria</taxon>
        <taxon>Bacillati</taxon>
        <taxon>Bacillota</taxon>
        <taxon>Bacilli</taxon>
        <taxon>Lactobacillales</taxon>
        <taxon>Streptococcaceae</taxon>
        <taxon>Streptococcus</taxon>
    </lineage>
</organism>